<organism evidence="14">
    <name type="scientific">Drosophila melanogaster</name>
    <name type="common">Fruit fly</name>
    <dbReference type="NCBI Taxonomy" id="7227"/>
    <lineage>
        <taxon>Eukaryota</taxon>
        <taxon>Metazoa</taxon>
        <taxon>Ecdysozoa</taxon>
        <taxon>Arthropoda</taxon>
        <taxon>Hexapoda</taxon>
        <taxon>Insecta</taxon>
        <taxon>Pterygota</taxon>
        <taxon>Neoptera</taxon>
        <taxon>Endopterygota</taxon>
        <taxon>Diptera</taxon>
        <taxon>Brachycera</taxon>
        <taxon>Muscomorpha</taxon>
        <taxon>Ephydroidea</taxon>
        <taxon>Drosophilidae</taxon>
        <taxon>Drosophila</taxon>
        <taxon>Sophophora</taxon>
    </lineage>
</organism>
<reference evidence="12" key="1">
    <citation type="journal article" date="1998" name="Dev. Biol.">
        <title>Dredd, a novel effector of the apoptosis activators reaper, grim, and hid in Drosophila.</title>
        <authorList>
            <person name="Chen P."/>
            <person name="Rodriguez A."/>
            <person name="Erskine R."/>
            <person name="Thach T."/>
            <person name="Abrams J.M."/>
        </authorList>
    </citation>
    <scope>NUCLEOTIDE SEQUENCE [MRNA] (ISOFORMS D; E AND ALPHA)</scope>
    <scope>FUNCTION</scope>
    <scope>SUBUNIT</scope>
    <scope>PROTEOLYTIC CLEAVAGE</scope>
    <scope>SUBCELLULAR LOCATION</scope>
    <scope>DEVELOPMENTAL STAGE</scope>
    <source>
        <tissue evidence="9">Embryo</tissue>
    </source>
</reference>
<reference evidence="12" key="2">
    <citation type="journal article" date="2000" name="Science">
        <title>The genome sequence of Drosophila melanogaster.</title>
        <authorList>
            <person name="Adams M.D."/>
            <person name="Celniker S.E."/>
            <person name="Holt R.A."/>
            <person name="Evans C.A."/>
            <person name="Gocayne J.D."/>
            <person name="Amanatides P.G."/>
            <person name="Scherer S.E."/>
            <person name="Li P.W."/>
            <person name="Hoskins R.A."/>
            <person name="Galle R.F."/>
            <person name="George R.A."/>
            <person name="Lewis S.E."/>
            <person name="Richards S."/>
            <person name="Ashburner M."/>
            <person name="Henderson S.N."/>
            <person name="Sutton G.G."/>
            <person name="Wortman J.R."/>
            <person name="Yandell M.D."/>
            <person name="Zhang Q."/>
            <person name="Chen L.X."/>
            <person name="Brandon R.C."/>
            <person name="Rogers Y.-H.C."/>
            <person name="Blazej R.G."/>
            <person name="Champe M."/>
            <person name="Pfeiffer B.D."/>
            <person name="Wan K.H."/>
            <person name="Doyle C."/>
            <person name="Baxter E.G."/>
            <person name="Helt G."/>
            <person name="Nelson C.R."/>
            <person name="Miklos G.L.G."/>
            <person name="Abril J.F."/>
            <person name="Agbayani A."/>
            <person name="An H.-J."/>
            <person name="Andrews-Pfannkoch C."/>
            <person name="Baldwin D."/>
            <person name="Ballew R.M."/>
            <person name="Basu A."/>
            <person name="Baxendale J."/>
            <person name="Bayraktaroglu L."/>
            <person name="Beasley E.M."/>
            <person name="Beeson K.Y."/>
            <person name="Benos P.V."/>
            <person name="Berman B.P."/>
            <person name="Bhandari D."/>
            <person name="Bolshakov S."/>
            <person name="Borkova D."/>
            <person name="Botchan M.R."/>
            <person name="Bouck J."/>
            <person name="Brokstein P."/>
            <person name="Brottier P."/>
            <person name="Burtis K.C."/>
            <person name="Busam D.A."/>
            <person name="Butler H."/>
            <person name="Cadieu E."/>
            <person name="Center A."/>
            <person name="Chandra I."/>
            <person name="Cherry J.M."/>
            <person name="Cawley S."/>
            <person name="Dahlke C."/>
            <person name="Davenport L.B."/>
            <person name="Davies P."/>
            <person name="de Pablos B."/>
            <person name="Delcher A."/>
            <person name="Deng Z."/>
            <person name="Mays A.D."/>
            <person name="Dew I."/>
            <person name="Dietz S.M."/>
            <person name="Dodson K."/>
            <person name="Doup L.E."/>
            <person name="Downes M."/>
            <person name="Dugan-Rocha S."/>
            <person name="Dunkov B.C."/>
            <person name="Dunn P."/>
            <person name="Durbin K.J."/>
            <person name="Evangelista C.C."/>
            <person name="Ferraz C."/>
            <person name="Ferriera S."/>
            <person name="Fleischmann W."/>
            <person name="Fosler C."/>
            <person name="Gabrielian A.E."/>
            <person name="Garg N.S."/>
            <person name="Gelbart W.M."/>
            <person name="Glasser K."/>
            <person name="Glodek A."/>
            <person name="Gong F."/>
            <person name="Gorrell J.H."/>
            <person name="Gu Z."/>
            <person name="Guan P."/>
            <person name="Harris M."/>
            <person name="Harris N.L."/>
            <person name="Harvey D.A."/>
            <person name="Heiman T.J."/>
            <person name="Hernandez J.R."/>
            <person name="Houck J."/>
            <person name="Hostin D."/>
            <person name="Houston K.A."/>
            <person name="Howland T.J."/>
            <person name="Wei M.-H."/>
            <person name="Ibegwam C."/>
            <person name="Jalali M."/>
            <person name="Kalush F."/>
            <person name="Karpen G.H."/>
            <person name="Ke Z."/>
            <person name="Kennison J.A."/>
            <person name="Ketchum K.A."/>
            <person name="Kimmel B.E."/>
            <person name="Kodira C.D."/>
            <person name="Kraft C.L."/>
            <person name="Kravitz S."/>
            <person name="Kulp D."/>
            <person name="Lai Z."/>
            <person name="Lasko P."/>
            <person name="Lei Y."/>
            <person name="Levitsky A.A."/>
            <person name="Li J.H."/>
            <person name="Li Z."/>
            <person name="Liang Y."/>
            <person name="Lin X."/>
            <person name="Liu X."/>
            <person name="Mattei B."/>
            <person name="McIntosh T.C."/>
            <person name="McLeod M.P."/>
            <person name="McPherson D."/>
            <person name="Merkulov G."/>
            <person name="Milshina N.V."/>
            <person name="Mobarry C."/>
            <person name="Morris J."/>
            <person name="Moshrefi A."/>
            <person name="Mount S.M."/>
            <person name="Moy M."/>
            <person name="Murphy B."/>
            <person name="Murphy L."/>
            <person name="Muzny D.M."/>
            <person name="Nelson D.L."/>
            <person name="Nelson D.R."/>
            <person name="Nelson K.A."/>
            <person name="Nixon K."/>
            <person name="Nusskern D.R."/>
            <person name="Pacleb J.M."/>
            <person name="Palazzolo M."/>
            <person name="Pittman G.S."/>
            <person name="Pan S."/>
            <person name="Pollard J."/>
            <person name="Puri V."/>
            <person name="Reese M.G."/>
            <person name="Reinert K."/>
            <person name="Remington K."/>
            <person name="Saunders R.D.C."/>
            <person name="Scheeler F."/>
            <person name="Shen H."/>
            <person name="Shue B.C."/>
            <person name="Siden-Kiamos I."/>
            <person name="Simpson M."/>
            <person name="Skupski M.P."/>
            <person name="Smith T.J."/>
            <person name="Spier E."/>
            <person name="Spradling A.C."/>
            <person name="Stapleton M."/>
            <person name="Strong R."/>
            <person name="Sun E."/>
            <person name="Svirskas R."/>
            <person name="Tector C."/>
            <person name="Turner R."/>
            <person name="Venter E."/>
            <person name="Wang A.H."/>
            <person name="Wang X."/>
            <person name="Wang Z.-Y."/>
            <person name="Wassarman D.A."/>
            <person name="Weinstock G.M."/>
            <person name="Weissenbach J."/>
            <person name="Williams S.M."/>
            <person name="Woodage T."/>
            <person name="Worley K.C."/>
            <person name="Wu D."/>
            <person name="Yang S."/>
            <person name="Yao Q.A."/>
            <person name="Ye J."/>
            <person name="Yeh R.-F."/>
            <person name="Zaveri J.S."/>
            <person name="Zhan M."/>
            <person name="Zhang G."/>
            <person name="Zhao Q."/>
            <person name="Zheng L."/>
            <person name="Zheng X.H."/>
            <person name="Zhong F.N."/>
            <person name="Zhong W."/>
            <person name="Zhou X."/>
            <person name="Zhu S.C."/>
            <person name="Zhu X."/>
            <person name="Smith H.O."/>
            <person name="Gibbs R.A."/>
            <person name="Myers E.W."/>
            <person name="Rubin G.M."/>
            <person name="Venter J.C."/>
        </authorList>
    </citation>
    <scope>NUCLEOTIDE SEQUENCE [LARGE SCALE GENOMIC DNA]</scope>
    <source>
        <strain evidence="3">Berkeley</strain>
    </source>
</reference>
<reference evidence="12" key="3">
    <citation type="journal article" date="2002" name="Genome Biol.">
        <title>Annotation of the Drosophila melanogaster euchromatic genome: a systematic review.</title>
        <authorList>
            <person name="Misra S."/>
            <person name="Crosby M.A."/>
            <person name="Mungall C.J."/>
            <person name="Matthews B.B."/>
            <person name="Campbell K.S."/>
            <person name="Hradecky P."/>
            <person name="Huang Y."/>
            <person name="Kaminker J.S."/>
            <person name="Millburn G.H."/>
            <person name="Prochnik S.E."/>
            <person name="Smith C.D."/>
            <person name="Tupy J.L."/>
            <person name="Whitfield E.J."/>
            <person name="Bayraktaroglu L."/>
            <person name="Berman B.P."/>
            <person name="Bettencourt B.R."/>
            <person name="Celniker S.E."/>
            <person name="de Grey A.D.N.J."/>
            <person name="Drysdale R.A."/>
            <person name="Harris N.L."/>
            <person name="Richter J."/>
            <person name="Russo S."/>
            <person name="Schroeder A.J."/>
            <person name="Shu S.Q."/>
            <person name="Stapleton M."/>
            <person name="Yamada C."/>
            <person name="Ashburner M."/>
            <person name="Gelbart W.M."/>
            <person name="Rubin G.M."/>
            <person name="Lewis S.E."/>
        </authorList>
    </citation>
    <scope>GENOME REANNOTATION</scope>
    <scope>ALTERNATIVE SPLICING</scope>
    <source>
        <strain>Berkeley</strain>
    </source>
</reference>
<reference evidence="12" key="4">
    <citation type="journal article" date="2000" name="Science">
        <title>From sequence to chromosome: the tip of the X chromosome of D. melanogaster.</title>
        <authorList>
            <person name="Benos P.V."/>
            <person name="Gatt M.K."/>
            <person name="Ashburner M."/>
            <person name="Murphy L."/>
            <person name="Harris D."/>
            <person name="Barrell B.G."/>
            <person name="Ferraz C."/>
            <person name="Vidal S."/>
            <person name="Brun C."/>
            <person name="Demailles J."/>
            <person name="Cadieu E."/>
            <person name="Dreano S."/>
            <person name="Gloux S."/>
            <person name="Lelaure V."/>
            <person name="Mottier S."/>
            <person name="Galibert F."/>
            <person name="Borkova D."/>
            <person name="Minana B."/>
            <person name="Kafatos F.C."/>
            <person name="Louis C."/>
            <person name="Siden-Kiamos I."/>
            <person name="Bolshakov S."/>
            <person name="Papagiannakis G."/>
            <person name="Spanos L."/>
            <person name="Cox S."/>
            <person name="Madueno E."/>
            <person name="de Pablos B."/>
            <person name="Modolell J."/>
            <person name="Peter A."/>
            <person name="Schoettler P."/>
            <person name="Werner M."/>
            <person name="Mourkioti F."/>
            <person name="Beinert N."/>
            <person name="Dowe G."/>
            <person name="Schaefer U."/>
            <person name="Jaeckle H."/>
            <person name="Bucheton A."/>
            <person name="Callister D.M."/>
            <person name="Campbell L.A."/>
            <person name="Darlamitsou A."/>
            <person name="Henderson N.S."/>
            <person name="McMillan P.J."/>
            <person name="Salles C."/>
            <person name="Tait E.A."/>
            <person name="Valenti P."/>
            <person name="Saunders R.D.C."/>
            <person name="Glover D.M."/>
        </authorList>
    </citation>
    <scope>NUCLEOTIDE SEQUENCE [LARGE SCALE GENOMIC DNA]</scope>
    <source>
        <strain evidence="4">Oregon-R</strain>
    </source>
</reference>
<reference evidence="12" key="5">
    <citation type="journal article" date="2002" name="Genome Biol.">
        <title>A Drosophila full-length cDNA resource.</title>
        <authorList>
            <person name="Stapleton M."/>
            <person name="Carlson J.W."/>
            <person name="Brokstein P."/>
            <person name="Yu C."/>
            <person name="Champe M."/>
            <person name="George R.A."/>
            <person name="Guarin H."/>
            <person name="Kronmiller B."/>
            <person name="Pacleb J.M."/>
            <person name="Park S."/>
            <person name="Wan K.H."/>
            <person name="Rubin G.M."/>
            <person name="Celniker S.E."/>
        </authorList>
    </citation>
    <scope>NUCLEOTIDE SEQUENCE [LARGE SCALE MRNA] (ISOFORM F)</scope>
    <source>
        <strain evidence="7">Berkeley</strain>
        <tissue evidence="7">Head</tissue>
    </source>
</reference>
<reference evidence="12" key="6">
    <citation type="journal article" date="1997" name="Proc. Natl. Acad. Sci. U.S.A.">
        <title>CLARP, a death effector domain-containing protein interacts with caspase-8 and regulates apoptosis.</title>
        <authorList>
            <person name="Inohara N."/>
            <person name="Koseki T."/>
            <person name="Hu Y."/>
            <person name="Chen S."/>
            <person name="Nunez G."/>
        </authorList>
    </citation>
    <scope>NUCLEOTIDE SEQUENCE [MRNA] OF 25-494 (ISOFORM E)</scope>
</reference>
<reference key="7">
    <citation type="journal article" date="1999" name="Nat. Cell Biol.">
        <title>Dark is a Drosophila homologue of Apaf-1/CED-4 and functions in an evolutionarily conserved death pathway.</title>
        <authorList>
            <person name="Rodriguez A."/>
            <person name="Oliver H."/>
            <person name="Zou H."/>
            <person name="Chen P."/>
            <person name="Wang X."/>
            <person name="Abrams J.M."/>
        </authorList>
    </citation>
    <scope>INTERACTION WITH DARK</scope>
</reference>
<reference evidence="12" key="8">
    <citation type="journal article" date="2000" name="EMBO Rep.">
        <title>The Drosophila caspase Dredd is required to resist Gram-negative bacterial infection.</title>
        <authorList>
            <person name="Leulier F."/>
            <person name="Rodriguez A."/>
            <person name="Khush R.S."/>
            <person name="Abrams J.M."/>
            <person name="Lemaitre B."/>
        </authorList>
    </citation>
    <scope>FUNCTION</scope>
    <scope>TISSUE SPECIFICITY</scope>
    <scope>MUTAGENESIS OF GLY-98 AND TRP-436</scope>
</reference>
<reference key="9">
    <citation type="journal article" date="2000" name="J. Biol. Chem.">
        <title>dFADD, a novel death domain-containing adapter protein for the Drosophila caspase DREDD.</title>
        <authorList>
            <person name="Hu S."/>
            <person name="Yang X."/>
        </authorList>
    </citation>
    <scope>FUNCTION</scope>
    <scope>INTERACTION WITH FADD</scope>
    <scope>SUBCELLULAR LOCATION</scope>
</reference>
<reference key="10">
    <citation type="journal article" date="2012" name="EMBO J.">
        <title>Ubiquitylation of the initiator caspase DREDD is required for innate immune signalling.</title>
        <authorList>
            <person name="Meinander A."/>
            <person name="Runchel C."/>
            <person name="Tenev T."/>
            <person name="Chen L."/>
            <person name="Kim C.H."/>
            <person name="Ribeiro P.S."/>
            <person name="Broemer M."/>
            <person name="Leulier F."/>
            <person name="Zvelebil M."/>
            <person name="Silverman N."/>
            <person name="Meier P."/>
        </authorList>
    </citation>
    <scope>FUNCTION</scope>
    <scope>UBIQUITINATION</scope>
    <scope>MUTAGENESIS OF GLY-98</scope>
    <scope>INTERACTION WITH FADD AND DIAP2</scope>
</reference>
<dbReference type="EC" id="3.4.22.61"/>
<dbReference type="EMBL" id="AF007016">
    <property type="protein sequence ID" value="AAC31214.1"/>
    <property type="molecule type" value="mRNA"/>
</dbReference>
<dbReference type="EMBL" id="AF083894">
    <property type="protein sequence ID" value="AAC33117.1"/>
    <property type="molecule type" value="mRNA"/>
</dbReference>
<dbReference type="EMBL" id="AF083895">
    <property type="protein sequence ID" value="AAC33118.1"/>
    <property type="molecule type" value="mRNA"/>
</dbReference>
<dbReference type="EMBL" id="AE014298">
    <property type="protein sequence ID" value="AAF45533.3"/>
    <property type="molecule type" value="Genomic_DNA"/>
</dbReference>
<dbReference type="EMBL" id="AE014298">
    <property type="protein sequence ID" value="AAN09022.2"/>
    <property type="molecule type" value="Genomic_DNA"/>
</dbReference>
<dbReference type="EMBL" id="AE014298">
    <property type="protein sequence ID" value="AAN09023.2"/>
    <property type="molecule type" value="Genomic_DNA"/>
</dbReference>
<dbReference type="EMBL" id="AL031581">
    <property type="protein sequence ID" value="CAA20893.1"/>
    <property type="molecule type" value="Genomic_DNA"/>
</dbReference>
<dbReference type="EMBL" id="AY060275">
    <property type="protein sequence ID" value="AAL25314.1"/>
    <property type="status" value="ALT_INIT"/>
    <property type="molecule type" value="mRNA"/>
</dbReference>
<dbReference type="EMBL" id="AF031652">
    <property type="protein sequence ID" value="AAC15843.1"/>
    <property type="molecule type" value="mRNA"/>
</dbReference>
<dbReference type="PIR" id="T13385">
    <property type="entry name" value="T13385"/>
</dbReference>
<dbReference type="RefSeq" id="NP_477249.3">
    <molecule id="Q8IRY7-1"/>
    <property type="nucleotide sequence ID" value="NM_057901.4"/>
</dbReference>
<dbReference type="RefSeq" id="NP_477250.3">
    <molecule id="Q8IRY7-3"/>
    <property type="nucleotide sequence ID" value="NM_057902.4"/>
</dbReference>
<dbReference type="RefSeq" id="NP_477251.3">
    <molecule id="Q8IRY7-2"/>
    <property type="nucleotide sequence ID" value="NM_057903.4"/>
</dbReference>
<dbReference type="SMR" id="Q8IRY7"/>
<dbReference type="BioGRID" id="57579">
    <property type="interactions" value="74"/>
</dbReference>
<dbReference type="FunCoup" id="Q8IRY7">
    <property type="interactions" value="351"/>
</dbReference>
<dbReference type="IntAct" id="Q8IRY7">
    <property type="interactions" value="5"/>
</dbReference>
<dbReference type="MINT" id="Q8IRY7"/>
<dbReference type="STRING" id="7227.FBpp0113052"/>
<dbReference type="MEROPS" id="C14.040"/>
<dbReference type="PaxDb" id="7227-FBpp0113052"/>
<dbReference type="DNASU" id="31011"/>
<dbReference type="EnsemblMetazoa" id="FBtr0114559">
    <molecule id="Q8IRY7-2"/>
    <property type="protein sequence ID" value="FBpp0113051"/>
    <property type="gene ID" value="FBgn0020381"/>
</dbReference>
<dbReference type="EnsemblMetazoa" id="FBtr0114560">
    <molecule id="Q8IRY7-1"/>
    <property type="protein sequence ID" value="FBpp0113052"/>
    <property type="gene ID" value="FBgn0020381"/>
</dbReference>
<dbReference type="EnsemblMetazoa" id="FBtr0114561">
    <molecule id="Q8IRY7-3"/>
    <property type="protein sequence ID" value="FBpp0113053"/>
    <property type="gene ID" value="FBgn0020381"/>
</dbReference>
<dbReference type="GeneID" id="31011"/>
<dbReference type="KEGG" id="dme:Dmel_CG7486"/>
<dbReference type="AGR" id="FB:FBgn0020381"/>
<dbReference type="CTD" id="31011"/>
<dbReference type="FlyBase" id="FBgn0020381">
    <property type="gene designation" value="Dredd"/>
</dbReference>
<dbReference type="VEuPathDB" id="VectorBase:FBgn0020381"/>
<dbReference type="eggNOG" id="KOG3573">
    <property type="taxonomic scope" value="Eukaryota"/>
</dbReference>
<dbReference type="GeneTree" id="ENSGT00940000160994"/>
<dbReference type="InParanoid" id="Q8IRY7"/>
<dbReference type="OMA" id="HGFEGAV"/>
<dbReference type="OrthoDB" id="6044770at2759"/>
<dbReference type="PhylomeDB" id="Q8IRY7"/>
<dbReference type="Reactome" id="R-DME-111458">
    <property type="pathway name" value="Formation of apoptosome"/>
</dbReference>
<dbReference type="Reactome" id="R-DME-111459">
    <property type="pathway name" value="Activation of caspases through apoptosome-mediated cleavage"/>
</dbReference>
<dbReference type="Reactome" id="R-DME-198323">
    <property type="pathway name" value="AKT phosphorylates targets in the cytosol"/>
</dbReference>
<dbReference type="Reactome" id="R-DME-214397">
    <property type="pathway name" value="Assembly of the PGN:PGRP-LC/LE receptor 'signalling complex'"/>
</dbReference>
<dbReference type="Reactome" id="R-DME-214399">
    <property type="pathway name" value="Activated IkappaB kinase (IKK) complex, Phospho IRD5:KEY dimer, phosphorylates REL in the PGN:PGRP-LC/LE receptor 'signalling complex'"/>
</dbReference>
<dbReference type="Reactome" id="R-DME-214411">
    <property type="pathway name" value="REL binds to DREDD in the PGN:PGRP-LC/LE receptor 'signalling complex'"/>
</dbReference>
<dbReference type="Reactome" id="R-DME-214416">
    <property type="pathway name" value="Phosphorylated REL is cleaved by and dissociates from DREDD"/>
</dbReference>
<dbReference type="Reactome" id="R-DME-5357905">
    <property type="pathway name" value="Regulation of TNFR1 signaling"/>
</dbReference>
<dbReference type="Reactome" id="R-DME-6803207">
    <property type="pathway name" value="TP53 Regulates Transcription of Caspase Activators and Caspases"/>
</dbReference>
<dbReference type="Reactome" id="R-DME-9627069">
    <property type="pathway name" value="Regulation of the apoptosome activity"/>
</dbReference>
<dbReference type="SignaLink" id="Q8IRY7"/>
<dbReference type="BioGRID-ORCS" id="31011">
    <property type="hits" value="0 hits in 3 CRISPR screens"/>
</dbReference>
<dbReference type="ChiTaRS" id="gem">
    <property type="organism name" value="fly"/>
</dbReference>
<dbReference type="GenomeRNAi" id="31011"/>
<dbReference type="PRO" id="PR:Q8IRY7"/>
<dbReference type="Proteomes" id="UP000000803">
    <property type="component" value="Chromosome X"/>
</dbReference>
<dbReference type="Bgee" id="FBgn0020381">
    <property type="expression patterns" value="Expressed in head cyst cell (Drosophila) in testis and 139 other cell types or tissues"/>
</dbReference>
<dbReference type="ExpressionAtlas" id="Q8IRY7">
    <property type="expression patterns" value="baseline and differential"/>
</dbReference>
<dbReference type="GO" id="GO:0005737">
    <property type="term" value="C:cytoplasm"/>
    <property type="evidence" value="ECO:0000314"/>
    <property type="project" value="UniProtKB"/>
</dbReference>
<dbReference type="GO" id="GO:0005829">
    <property type="term" value="C:cytosol"/>
    <property type="evidence" value="ECO:0000304"/>
    <property type="project" value="Reactome"/>
</dbReference>
<dbReference type="GO" id="GO:0008656">
    <property type="term" value="F:cysteine-type endopeptidase activator activity involved in apoptotic process"/>
    <property type="evidence" value="ECO:0000315"/>
    <property type="project" value="UniProtKB"/>
</dbReference>
<dbReference type="GO" id="GO:0004197">
    <property type="term" value="F:cysteine-type endopeptidase activity"/>
    <property type="evidence" value="ECO:0000314"/>
    <property type="project" value="FlyBase"/>
</dbReference>
<dbReference type="GO" id="GO:0008047">
    <property type="term" value="F:enzyme activator activity"/>
    <property type="evidence" value="ECO:0000318"/>
    <property type="project" value="GO_Central"/>
</dbReference>
<dbReference type="GO" id="GO:0006915">
    <property type="term" value="P:apoptotic process"/>
    <property type="evidence" value="ECO:0000315"/>
    <property type="project" value="UniProtKB"/>
</dbReference>
<dbReference type="GO" id="GO:0006952">
    <property type="term" value="P:defense response"/>
    <property type="evidence" value="ECO:0000315"/>
    <property type="project" value="FlyBase"/>
</dbReference>
<dbReference type="GO" id="GO:0050829">
    <property type="term" value="P:defense response to Gram-negative bacterium"/>
    <property type="evidence" value="ECO:0000315"/>
    <property type="project" value="UniProtKB"/>
</dbReference>
<dbReference type="GO" id="GO:0097194">
    <property type="term" value="P:execution phase of apoptosis"/>
    <property type="evidence" value="ECO:0000318"/>
    <property type="project" value="GO_Central"/>
</dbReference>
<dbReference type="GO" id="GO:0006955">
    <property type="term" value="P:immune response"/>
    <property type="evidence" value="ECO:0000315"/>
    <property type="project" value="FlyBase"/>
</dbReference>
<dbReference type="GO" id="GO:0045087">
    <property type="term" value="P:innate immune response"/>
    <property type="evidence" value="ECO:0000304"/>
    <property type="project" value="FlyBase"/>
</dbReference>
<dbReference type="GO" id="GO:0043069">
    <property type="term" value="P:negative regulation of programmed cell death"/>
    <property type="evidence" value="ECO:0000315"/>
    <property type="project" value="FlyBase"/>
</dbReference>
<dbReference type="GO" id="GO:0061057">
    <property type="term" value="P:peptidoglycan recognition protein signaling pathway"/>
    <property type="evidence" value="ECO:0000314"/>
    <property type="project" value="FlyBase"/>
</dbReference>
<dbReference type="GO" id="GO:0048935">
    <property type="term" value="P:peripheral nervous system neuron development"/>
    <property type="evidence" value="ECO:0000315"/>
    <property type="project" value="FlyBase"/>
</dbReference>
<dbReference type="GO" id="GO:0006963">
    <property type="term" value="P:positive regulation of antibacterial peptide biosynthetic process"/>
    <property type="evidence" value="ECO:0000304"/>
    <property type="project" value="FlyBase"/>
</dbReference>
<dbReference type="GO" id="GO:0006964">
    <property type="term" value="P:positive regulation of biosynthetic process of antibacterial peptides active against Gram-negative bacteria"/>
    <property type="evidence" value="ECO:0000315"/>
    <property type="project" value="UniProtKB"/>
</dbReference>
<dbReference type="GO" id="GO:0002230">
    <property type="term" value="P:positive regulation of defense response to virus by host"/>
    <property type="evidence" value="ECO:0000315"/>
    <property type="project" value="FlyBase"/>
</dbReference>
<dbReference type="GO" id="GO:0045089">
    <property type="term" value="P:positive regulation of innate immune response"/>
    <property type="evidence" value="ECO:0007001"/>
    <property type="project" value="FlyBase"/>
</dbReference>
<dbReference type="GO" id="GO:0043525">
    <property type="term" value="P:positive regulation of neuron apoptotic process"/>
    <property type="evidence" value="ECO:0000318"/>
    <property type="project" value="GO_Central"/>
</dbReference>
<dbReference type="GO" id="GO:0016485">
    <property type="term" value="P:protein processing"/>
    <property type="evidence" value="ECO:0000314"/>
    <property type="project" value="FlyBase"/>
</dbReference>
<dbReference type="GO" id="GO:0006508">
    <property type="term" value="P:proteolysis"/>
    <property type="evidence" value="ECO:0000318"/>
    <property type="project" value="GO_Central"/>
</dbReference>
<dbReference type="GO" id="GO:0007291">
    <property type="term" value="P:sperm individualization"/>
    <property type="evidence" value="ECO:0000315"/>
    <property type="project" value="FlyBase"/>
</dbReference>
<dbReference type="CDD" id="cd00032">
    <property type="entry name" value="CASc"/>
    <property type="match status" value="1"/>
</dbReference>
<dbReference type="FunFam" id="3.40.50.1460:FF:000029">
    <property type="entry name" value="Death related ced-3/Nedd2-like protein"/>
    <property type="match status" value="1"/>
</dbReference>
<dbReference type="Gene3D" id="3.40.50.1460">
    <property type="match status" value="1"/>
</dbReference>
<dbReference type="InterPro" id="IPR029030">
    <property type="entry name" value="Caspase-like_dom_sf"/>
</dbReference>
<dbReference type="InterPro" id="IPR056260">
    <property type="entry name" value="Dredd_2nd"/>
</dbReference>
<dbReference type="InterPro" id="IPR056259">
    <property type="entry name" value="Dredd_N"/>
</dbReference>
<dbReference type="InterPro" id="IPR011600">
    <property type="entry name" value="Pept_C14_caspase"/>
</dbReference>
<dbReference type="InterPro" id="IPR002138">
    <property type="entry name" value="Pept_C14_p10"/>
</dbReference>
<dbReference type="InterPro" id="IPR001309">
    <property type="entry name" value="Pept_C14_p20"/>
</dbReference>
<dbReference type="InterPro" id="IPR015917">
    <property type="entry name" value="Pept_C14A"/>
</dbReference>
<dbReference type="PANTHER" id="PTHR48169:SF7">
    <property type="entry name" value="CASPASE 10"/>
    <property type="match status" value="1"/>
</dbReference>
<dbReference type="PANTHER" id="PTHR48169">
    <property type="entry name" value="DED DOMAIN-CONTAINING PROTEIN"/>
    <property type="match status" value="1"/>
</dbReference>
<dbReference type="Pfam" id="PF23724">
    <property type="entry name" value="Dredd_2nd"/>
    <property type="match status" value="1"/>
</dbReference>
<dbReference type="Pfam" id="PF23725">
    <property type="entry name" value="Dredd_N"/>
    <property type="match status" value="1"/>
</dbReference>
<dbReference type="Pfam" id="PF00656">
    <property type="entry name" value="Peptidase_C14"/>
    <property type="match status" value="1"/>
</dbReference>
<dbReference type="PRINTS" id="PR00376">
    <property type="entry name" value="IL1BCENZYME"/>
</dbReference>
<dbReference type="SMART" id="SM00115">
    <property type="entry name" value="CASc"/>
    <property type="match status" value="1"/>
</dbReference>
<dbReference type="SUPFAM" id="SSF52129">
    <property type="entry name" value="Caspase-like"/>
    <property type="match status" value="1"/>
</dbReference>
<dbReference type="PROSITE" id="PS01122">
    <property type="entry name" value="CASPASE_CYS"/>
    <property type="match status" value="1"/>
</dbReference>
<dbReference type="PROSITE" id="PS50207">
    <property type="entry name" value="CASPASE_P10"/>
    <property type="match status" value="1"/>
</dbReference>
<dbReference type="PROSITE" id="PS50208">
    <property type="entry name" value="CASPASE_P20"/>
    <property type="match status" value="1"/>
</dbReference>
<evidence type="ECO:0000250" key="1"/>
<evidence type="ECO:0000269" key="2">
    <source>
    </source>
</evidence>
<evidence type="ECO:0000269" key="3">
    <source>
    </source>
</evidence>
<evidence type="ECO:0000269" key="4">
    <source>
    </source>
</evidence>
<evidence type="ECO:0000269" key="5">
    <source>
    </source>
</evidence>
<evidence type="ECO:0000269" key="6">
    <source>
    </source>
</evidence>
<evidence type="ECO:0000269" key="7">
    <source>
    </source>
</evidence>
<evidence type="ECO:0000269" key="8">
    <source>
    </source>
</evidence>
<evidence type="ECO:0000269" key="9">
    <source>
    </source>
</evidence>
<evidence type="ECO:0000303" key="10">
    <source>
    </source>
</evidence>
<evidence type="ECO:0000303" key="11">
    <source>
    </source>
</evidence>
<evidence type="ECO:0000305" key="12"/>
<evidence type="ECO:0000312" key="13">
    <source>
        <dbReference type="FlyBase" id="FBgn0020381"/>
    </source>
</evidence>
<evidence type="ECO:0000312" key="14">
    <source>
        <dbReference type="Proteomes" id="UP000000803"/>
    </source>
</evidence>
<accession>Q8IRY7</accession>
<accession>O02433</accession>
<accession>O76797</accession>
<accession>O76798</accession>
<accession>Q95T94</accession>
<accession>Q9UB42</accession>
<accession>Q9W5E3</accession>
<protein>
    <recommendedName>
        <fullName>Caspase-8</fullName>
        <ecNumber>3.4.22.61</ecNumber>
    </recommendedName>
    <alternativeName>
        <fullName evidence="13">Death-related ced-3/NEDD2-like protein</fullName>
    </alternativeName>
    <component>
        <recommendedName>
            <fullName>Caspase-8 subunit p15</fullName>
        </recommendedName>
    </component>
    <component>
        <recommendedName>
            <fullName>Caspase-8 subunit p10</fullName>
        </recommendedName>
    </component>
</protein>
<comment type="function">
    <text evidence="5 6 8 9">Effector of the programmed cell death (PCD) activators rpr, grim and hid (PubMed:9740659). May play an apoptotic role in the germline as well as soma. Fadd interacts with Dredd to promote cleavage of Dredd and is necessary and sufficient for enhancing Dredd-induced apoptosis (PubMed:10934188). Plays a role in the innate immune response. Required for resistance to Gram-negative bacterial infection (PubMed:11269502). Diap2-mediated ubiquitination of Dredd is critical for processing of imd and rel and the subsequent expression of antimicrobial genes such as DptA (PubMed:22549468).</text>
</comment>
<comment type="catalytic activity">
    <reaction>
        <text>Strict requirement for Asp at position P1 and has a preferred cleavage sequence of (Leu/Asp/Val)-Glu-Thr-Asp-|-(Gly/Ser/Ala).</text>
        <dbReference type="EC" id="3.4.22.61"/>
    </reaction>
</comment>
<comment type="subunit">
    <text evidence="2 5 8 9">Heterotetramer that consists of two anti-parallel arranged heterodimers, each one formed by a 15 kDa (caspase-8 subunit p15) and a 10 kDa (caspase-8 subunit p10) subunit (PubMed:9740659). Interacts (via N-terminus) with Diap2; likely to bind Diap2 simultaneously with Fadd to form a trimeric complex (PubMed:10934188, PubMed:22549468). Interacts with Dark (via N-terminus) (PubMed:10559939).</text>
</comment>
<comment type="subcellular location">
    <subcellularLocation>
        <location evidence="5 9">Cytoplasm</location>
    </subcellularLocation>
</comment>
<comment type="alternative products">
    <event type="alternative splicing"/>
    <isoform>
        <id>Q8IRY7-1</id>
        <name>E</name>
        <name>Caspase-8 delta</name>
        <sequence type="displayed"/>
    </isoform>
    <isoform>
        <id>Q8IRY7-2</id>
        <name>D</name>
        <name>Caspase-8 gamma</name>
        <sequence type="described" ref="VSP_050749"/>
    </isoform>
    <isoform>
        <id>Q8IRY7-3</id>
        <name>F</name>
        <sequence type="described" ref="VSP_050750 VSP_050751"/>
    </isoform>
    <isoform>
        <id>Q8IRY7-4</id>
        <name evidence="9">alpha</name>
        <sequence type="described" ref="VSP_050748"/>
    </isoform>
</comment>
<comment type="tissue specificity">
    <text evidence="6">Constitutively expressed in fat bodies of larvae and adults.</text>
</comment>
<comment type="developmental stage">
    <text evidence="9">Expressed both maternally and zygotically. Embryos exhibit ubiquitous low level of expression until stage 11 and then expression becomes spatially and temporally restricted to areas of PCD.</text>
</comment>
<comment type="PTM">
    <text evidence="8">Polyubiquitinated by Diap2 following activation of the immune deficiency (Imd) pathway.</text>
</comment>
<comment type="similarity">
    <text evidence="12">Belongs to the peptidase C14A family.</text>
</comment>
<comment type="sequence caution" evidence="12">
    <conflict type="erroneous initiation">
        <sequence resource="EMBL-CDS" id="AAL25314"/>
    </conflict>
</comment>
<feature type="propeptide" id="PRO_0000004636" evidence="1">
    <location>
        <begin position="1"/>
        <end position="242"/>
    </location>
</feature>
<feature type="chain" id="PRO_0000004637" description="Caspase-8 subunit p15">
    <location>
        <begin position="243"/>
        <end position="400"/>
    </location>
</feature>
<feature type="propeptide" id="PRO_0000004638" evidence="1">
    <location>
        <begin position="401"/>
        <end position="410"/>
    </location>
</feature>
<feature type="chain" id="PRO_0000004639" description="Caspase-8 subunit p10">
    <location>
        <begin position="411"/>
        <end position="494"/>
    </location>
</feature>
<feature type="active site" evidence="1">
    <location>
        <position position="345"/>
    </location>
</feature>
<feature type="active site" evidence="1">
    <location>
        <position position="386"/>
    </location>
</feature>
<feature type="splice variant" id="VSP_050748" description="In isoform alpha." evidence="11">
    <location>
        <begin position="1"/>
        <end position="128"/>
    </location>
</feature>
<feature type="splice variant" id="VSP_050749" description="In isoform D." evidence="11">
    <location>
        <begin position="273"/>
        <end position="278"/>
    </location>
</feature>
<feature type="splice variant" id="VSP_050750" description="In isoform F." evidence="10">
    <original>KFLSPD</original>
    <variation>VSSLQY</variation>
    <location>
        <begin position="279"/>
        <end position="284"/>
    </location>
</feature>
<feature type="splice variant" id="VSP_050751" description="In isoform F." evidence="10">
    <location>
        <begin position="285"/>
        <end position="494"/>
    </location>
</feature>
<feature type="mutagenesis site" description="In D44; reduces polyubiquitination by Diap2, abolishes rel cleavage and blocks expression of DptA following bacterial infection. No effect on binding to Diap2 or Fadd, processing, dimerization, catalytic activity or stability." evidence="6 8">
    <original>G</original>
    <variation>R</variation>
    <location>
        <position position="98"/>
    </location>
</feature>
<feature type="mutagenesis site" description="In L23; blocks expression of DptA following bacterial infection." evidence="6">
    <original>W</original>
    <variation>R</variation>
    <location>
        <position position="436"/>
    </location>
</feature>
<feature type="sequence conflict" description="In Ref. 1; AAC33117/AAC33118." evidence="12" ref="1">
    <original>K</original>
    <variation>N</variation>
    <location>
        <position position="481"/>
    </location>
</feature>
<proteinExistence type="evidence at protein level"/>
<gene>
    <name evidence="13" type="primary">Dredd</name>
    <name evidence="13" type="synonym">DCP2</name>
    <name evidence="13" type="ORF">CG7486</name>
</gene>
<name>CASP8_DROME</name>
<keyword id="KW-0025">Alternative splicing</keyword>
<keyword id="KW-0053">Apoptosis</keyword>
<keyword id="KW-0963">Cytoplasm</keyword>
<keyword id="KW-0378">Hydrolase</keyword>
<keyword id="KW-0391">Immunity</keyword>
<keyword id="KW-0399">Innate immunity</keyword>
<keyword id="KW-0645">Protease</keyword>
<keyword id="KW-1185">Reference proteome</keyword>
<keyword id="KW-0788">Thiol protease</keyword>
<keyword id="KW-0832">Ubl conjugation</keyword>
<keyword id="KW-0865">Zymogen</keyword>
<sequence length="494" mass="56153">MAGSNLLIHLDTIDQNDLIYVERDMNFAQKVGLCFLLYGDDHSDATYILQKLLAMTRSDFPQSDLLIKFAKSRPETWRRHLVEALCIIGARKVLRRLGFCWQELRMHYLPHIAGITLHVHPLLKSLYRMCEELSLVQSGRLLLDVREKVESQQAGDPLRFYDPAYLEIFLLDWLTRRSIKLGDINAAGSDVQLLVGHLKSNGLQAQANLLKDTIISNAPEPDAAGTAAMAVKQEIESDNQQSYCSTQIDALKLTRENAGIALIINQQKFHRNVSRDNMKFLSPDPLRRRDGTDVDKERLIEVFSSMGYNVEAYDNVDHMGIIERIRSACDRSLVRDSLVVFILSHGFEEAVYASNSIAMKITDIEDLLCSYDTLYYKPKLLIIQACQEKLVHKKKPNELFRIDVTTVSPDQHIDMLRAMSTVNGYAALRHTQTGSWFIGSLCDAIDRRSASEHIADILTIVTNEVSKKRGSNDESMVPNVKSTFRQHVYFPPRL</sequence>